<keyword id="KW-0238">DNA-binding</keyword>
<keyword id="KW-0371">Homeobox</keyword>
<keyword id="KW-0539">Nucleus</keyword>
<keyword id="KW-1185">Reference proteome</keyword>
<comment type="subcellular location">
    <subcellularLocation>
        <location evidence="1">Nucleus</location>
    </subcellularLocation>
</comment>
<comment type="similarity">
    <text evidence="2">Belongs to the TALE/KNOX homeobox family.</text>
</comment>
<name>HD12_ENCCU</name>
<sequence>MMRHINEILIAKEKYFQSSINDHDLKEIILKIQQDCITYHSTDLLGSSLLHKLILILIIEKFKSLLLFEKNIISIFDLECVNFQEEMNSIMYVMNEVEKQYLRSDKFSTHNHSLTGGLFASNSVIRRINFPKEISKILRKWLKKHLTYPYPSKIEKKMLSKETGLKLSQIDNWFANARRRILPFMKEKFIDFD</sequence>
<organism>
    <name type="scientific">Encephalitozoon cuniculi (strain GB-M1)</name>
    <name type="common">Microsporidian parasite</name>
    <dbReference type="NCBI Taxonomy" id="284813"/>
    <lineage>
        <taxon>Eukaryota</taxon>
        <taxon>Fungi</taxon>
        <taxon>Fungi incertae sedis</taxon>
        <taxon>Microsporidia</taxon>
        <taxon>Unikaryonidae</taxon>
        <taxon>Encephalitozoon</taxon>
    </lineage>
</organism>
<evidence type="ECO:0000255" key="1">
    <source>
        <dbReference type="PROSITE-ProRule" id="PRU00108"/>
    </source>
</evidence>
<evidence type="ECO:0000305" key="2"/>
<feature type="chain" id="PRO_0000048921" description="Homeobox protein HD-12">
    <location>
        <begin position="1"/>
        <end position="193"/>
    </location>
</feature>
<feature type="DNA-binding region" description="Homeobox; TALE-type" evidence="1">
    <location>
        <begin position="123"/>
        <end position="185"/>
    </location>
</feature>
<proteinExistence type="inferred from homology"/>
<reference key="1">
    <citation type="journal article" date="2001" name="Nature">
        <title>Genome sequence and gene compaction of the eukaryote parasite Encephalitozoon cuniculi.</title>
        <authorList>
            <person name="Katinka M.D."/>
            <person name="Duprat S."/>
            <person name="Cornillot E."/>
            <person name="Metenier G."/>
            <person name="Thomarat F."/>
            <person name="Prensier G."/>
            <person name="Barbe V."/>
            <person name="Peyretaillade E."/>
            <person name="Brottier P."/>
            <person name="Wincker P."/>
            <person name="Delbac F."/>
            <person name="El Alaoui H."/>
            <person name="Peyret P."/>
            <person name="Saurin W."/>
            <person name="Gouy M."/>
            <person name="Weissenbach J."/>
            <person name="Vivares C.P."/>
        </authorList>
    </citation>
    <scope>NUCLEOTIDE SEQUENCE [LARGE SCALE GENOMIC DNA]</scope>
    <source>
        <strain>GB-M1</strain>
    </source>
</reference>
<reference key="2">
    <citation type="journal article" date="2003" name="Dev. Genes Evol.">
        <title>The homeobox genes of Encephalitozoon cuniculi (Microsporidia) reveal a putative mating-type locus.</title>
        <authorList>
            <person name="Buerglin T.R."/>
        </authorList>
    </citation>
    <scope>DISCUSSION OF SEQUENCE</scope>
</reference>
<accession>Q8SRR1</accession>
<accession>Q7SI82</accession>
<dbReference type="EMBL" id="AL590446">
    <property type="protein sequence ID" value="CAD25434.1"/>
    <property type="molecule type" value="Genomic_DNA"/>
</dbReference>
<dbReference type="EMBL" id="BK001347">
    <property type="protein sequence ID" value="DAA01310.1"/>
    <property type="molecule type" value="Genomic_DNA"/>
</dbReference>
<dbReference type="RefSeq" id="NP_585830.1">
    <property type="nucleotide sequence ID" value="NM_001041452.1"/>
</dbReference>
<dbReference type="SMR" id="Q8SRR1"/>
<dbReference type="STRING" id="284813.Q8SRR1"/>
<dbReference type="GeneID" id="859254"/>
<dbReference type="KEGG" id="ecu:ECU06_0740"/>
<dbReference type="VEuPathDB" id="MicrosporidiaDB:ECU06_0740"/>
<dbReference type="HOGENOM" id="CLU_106819_0_0_1"/>
<dbReference type="InParanoid" id="Q8SRR1"/>
<dbReference type="OMA" id="DICQINN"/>
<dbReference type="OrthoDB" id="10056939at2759"/>
<dbReference type="Proteomes" id="UP000000819">
    <property type="component" value="Chromosome VI"/>
</dbReference>
<dbReference type="GO" id="GO:0005634">
    <property type="term" value="C:nucleus"/>
    <property type="evidence" value="ECO:0007669"/>
    <property type="project" value="UniProtKB-SubCell"/>
</dbReference>
<dbReference type="GO" id="GO:0003677">
    <property type="term" value="F:DNA binding"/>
    <property type="evidence" value="ECO:0007669"/>
    <property type="project" value="UniProtKB-KW"/>
</dbReference>
<dbReference type="GO" id="GO:0006355">
    <property type="term" value="P:regulation of DNA-templated transcription"/>
    <property type="evidence" value="ECO:0007669"/>
    <property type="project" value="InterPro"/>
</dbReference>
<dbReference type="CDD" id="cd00086">
    <property type="entry name" value="homeodomain"/>
    <property type="match status" value="1"/>
</dbReference>
<dbReference type="Gene3D" id="1.10.10.60">
    <property type="entry name" value="Homeodomain-like"/>
    <property type="match status" value="1"/>
</dbReference>
<dbReference type="InterPro" id="IPR001356">
    <property type="entry name" value="HD"/>
</dbReference>
<dbReference type="InterPro" id="IPR009057">
    <property type="entry name" value="Homeodomain-like_sf"/>
</dbReference>
<dbReference type="InterPro" id="IPR008422">
    <property type="entry name" value="KN_HD"/>
</dbReference>
<dbReference type="InterPro" id="IPR050224">
    <property type="entry name" value="TALE_homeobox"/>
</dbReference>
<dbReference type="PANTHER" id="PTHR11850">
    <property type="entry name" value="HOMEOBOX PROTEIN TRANSCRIPTION FACTORS"/>
    <property type="match status" value="1"/>
</dbReference>
<dbReference type="Pfam" id="PF05920">
    <property type="entry name" value="Homeobox_KN"/>
    <property type="match status" value="1"/>
</dbReference>
<dbReference type="SMART" id="SM00389">
    <property type="entry name" value="HOX"/>
    <property type="match status" value="1"/>
</dbReference>
<dbReference type="SUPFAM" id="SSF46689">
    <property type="entry name" value="Homeodomain-like"/>
    <property type="match status" value="1"/>
</dbReference>
<dbReference type="PROSITE" id="PS50071">
    <property type="entry name" value="HOMEOBOX_2"/>
    <property type="match status" value="1"/>
</dbReference>
<gene>
    <name type="primary">HD-12</name>
    <name type="ordered locus">ECU06_0740</name>
</gene>
<protein>
    <recommendedName>
        <fullName>Homeobox protein HD-12</fullName>
    </recommendedName>
    <alternativeName>
        <fullName>EcHD-12</fullName>
    </alternativeName>
</protein>